<evidence type="ECO:0000250" key="1"/>
<evidence type="ECO:0000250" key="2">
    <source>
        <dbReference type="UniProtKB" id="P03347"/>
    </source>
</evidence>
<evidence type="ECO:0000250" key="3">
    <source>
        <dbReference type="UniProtKB" id="P03348"/>
    </source>
</evidence>
<evidence type="ECO:0000250" key="4">
    <source>
        <dbReference type="UniProtKB" id="P03349"/>
    </source>
</evidence>
<evidence type="ECO:0000250" key="5">
    <source>
        <dbReference type="UniProtKB" id="P04591"/>
    </source>
</evidence>
<evidence type="ECO:0000250" key="6">
    <source>
        <dbReference type="UniProtKB" id="P12493"/>
    </source>
</evidence>
<evidence type="ECO:0000250" key="7">
    <source>
        <dbReference type="UniProtKB" id="P12497"/>
    </source>
</evidence>
<evidence type="ECO:0000255" key="8">
    <source>
        <dbReference type="PROSITE-ProRule" id="PRU00047"/>
    </source>
</evidence>
<evidence type="ECO:0000256" key="9">
    <source>
        <dbReference type="SAM" id="MobiDB-lite"/>
    </source>
</evidence>
<evidence type="ECO:0000305" key="10"/>
<evidence type="ECO:0007829" key="11">
    <source>
        <dbReference type="PDB" id="7T12"/>
    </source>
</evidence>
<accession>Q79665</accession>
<dbReference type="EMBL" id="L20571">
    <property type="protein sequence ID" value="AAA44859.1"/>
    <property type="molecule type" value="Genomic_RNA"/>
</dbReference>
<dbReference type="PDB" id="7T12">
    <property type="method" value="X-ray"/>
    <property type="resolution" value="3.00 A"/>
    <property type="chains" value="A/B/C/D/E/F/G/H/I/J/K/L=131-362"/>
</dbReference>
<dbReference type="PDBsum" id="7T12"/>
<dbReference type="SMR" id="Q79665"/>
<dbReference type="PRO" id="PR:Q79665"/>
<dbReference type="Proteomes" id="UP000007698">
    <property type="component" value="Segment"/>
</dbReference>
<dbReference type="GO" id="GO:0042025">
    <property type="term" value="C:host cell nucleus"/>
    <property type="evidence" value="ECO:0007669"/>
    <property type="project" value="UniProtKB-SubCell"/>
</dbReference>
<dbReference type="GO" id="GO:0020002">
    <property type="term" value="C:host cell plasma membrane"/>
    <property type="evidence" value="ECO:0007669"/>
    <property type="project" value="UniProtKB-SubCell"/>
</dbReference>
<dbReference type="GO" id="GO:0072494">
    <property type="term" value="C:host multivesicular body"/>
    <property type="evidence" value="ECO:0007669"/>
    <property type="project" value="UniProtKB-SubCell"/>
</dbReference>
<dbReference type="GO" id="GO:0016020">
    <property type="term" value="C:membrane"/>
    <property type="evidence" value="ECO:0007669"/>
    <property type="project" value="UniProtKB-KW"/>
</dbReference>
<dbReference type="GO" id="GO:0019013">
    <property type="term" value="C:viral nucleocapsid"/>
    <property type="evidence" value="ECO:0007669"/>
    <property type="project" value="UniProtKB-KW"/>
</dbReference>
<dbReference type="GO" id="GO:0055036">
    <property type="term" value="C:virion membrane"/>
    <property type="evidence" value="ECO:0007669"/>
    <property type="project" value="UniProtKB-SubCell"/>
</dbReference>
<dbReference type="GO" id="GO:0003723">
    <property type="term" value="F:RNA binding"/>
    <property type="evidence" value="ECO:0007669"/>
    <property type="project" value="UniProtKB-KW"/>
</dbReference>
<dbReference type="GO" id="GO:0005198">
    <property type="term" value="F:structural molecule activity"/>
    <property type="evidence" value="ECO:0007669"/>
    <property type="project" value="InterPro"/>
</dbReference>
<dbReference type="GO" id="GO:0008270">
    <property type="term" value="F:zinc ion binding"/>
    <property type="evidence" value="ECO:0007669"/>
    <property type="project" value="UniProtKB-KW"/>
</dbReference>
<dbReference type="GO" id="GO:0039702">
    <property type="term" value="P:viral budding via host ESCRT complex"/>
    <property type="evidence" value="ECO:0007669"/>
    <property type="project" value="UniProtKB-KW"/>
</dbReference>
<dbReference type="GO" id="GO:0075523">
    <property type="term" value="P:viral translational frameshifting"/>
    <property type="evidence" value="ECO:0007669"/>
    <property type="project" value="UniProtKB-KW"/>
</dbReference>
<dbReference type="FunFam" id="1.10.1200.30:FF:000001">
    <property type="entry name" value="Gag polyprotein"/>
    <property type="match status" value="1"/>
</dbReference>
<dbReference type="Gene3D" id="1.10.1200.30">
    <property type="match status" value="1"/>
</dbReference>
<dbReference type="Gene3D" id="6.10.250.390">
    <property type="match status" value="1"/>
</dbReference>
<dbReference type="Gene3D" id="1.10.375.10">
    <property type="entry name" value="Human Immunodeficiency Virus Type 1 Capsid Protein"/>
    <property type="match status" value="1"/>
</dbReference>
<dbReference type="Gene3D" id="1.10.150.90">
    <property type="entry name" value="Immunodeficiency lentiviruses, gag gene matrix protein p17"/>
    <property type="match status" value="1"/>
</dbReference>
<dbReference type="Gene3D" id="1.20.5.760">
    <property type="entry name" value="Single helix bin"/>
    <property type="match status" value="1"/>
</dbReference>
<dbReference type="Gene3D" id="4.10.60.10">
    <property type="entry name" value="Zinc finger, CCHC-type"/>
    <property type="match status" value="1"/>
</dbReference>
<dbReference type="InterPro" id="IPR045345">
    <property type="entry name" value="Gag_p24_C"/>
</dbReference>
<dbReference type="InterPro" id="IPR000071">
    <property type="entry name" value="Lentvrl_matrix_N"/>
</dbReference>
<dbReference type="InterPro" id="IPR012344">
    <property type="entry name" value="Matrix_HIV/RSV_N"/>
</dbReference>
<dbReference type="InterPro" id="IPR050195">
    <property type="entry name" value="Primate_lentivir_Gag_pol-like"/>
</dbReference>
<dbReference type="InterPro" id="IPR008916">
    <property type="entry name" value="Retrov_capsid_C"/>
</dbReference>
<dbReference type="InterPro" id="IPR008919">
    <property type="entry name" value="Retrov_capsid_N"/>
</dbReference>
<dbReference type="InterPro" id="IPR010999">
    <property type="entry name" value="Retrovr_matrix"/>
</dbReference>
<dbReference type="InterPro" id="IPR001878">
    <property type="entry name" value="Znf_CCHC"/>
</dbReference>
<dbReference type="InterPro" id="IPR036875">
    <property type="entry name" value="Znf_CCHC_sf"/>
</dbReference>
<dbReference type="PANTHER" id="PTHR40389:SF4">
    <property type="match status" value="1"/>
</dbReference>
<dbReference type="PANTHER" id="PTHR40389">
    <property type="entry name" value="ENDOGENOUS RETROVIRUS GROUP K MEMBER 24 GAG POLYPROTEIN-RELATED"/>
    <property type="match status" value="1"/>
</dbReference>
<dbReference type="Pfam" id="PF00540">
    <property type="entry name" value="Gag_p17"/>
    <property type="match status" value="1"/>
</dbReference>
<dbReference type="Pfam" id="PF00607">
    <property type="entry name" value="Gag_p24"/>
    <property type="match status" value="1"/>
</dbReference>
<dbReference type="Pfam" id="PF19317">
    <property type="entry name" value="Gag_p24_C"/>
    <property type="match status" value="1"/>
</dbReference>
<dbReference type="Pfam" id="PF00098">
    <property type="entry name" value="zf-CCHC"/>
    <property type="match status" value="2"/>
</dbReference>
<dbReference type="PRINTS" id="PR00234">
    <property type="entry name" value="HIV1MATRIX"/>
</dbReference>
<dbReference type="SMART" id="SM00343">
    <property type="entry name" value="ZnF_C2HC"/>
    <property type="match status" value="2"/>
</dbReference>
<dbReference type="SUPFAM" id="SSF47836">
    <property type="entry name" value="Retroviral matrix proteins"/>
    <property type="match status" value="1"/>
</dbReference>
<dbReference type="SUPFAM" id="SSF47353">
    <property type="entry name" value="Retrovirus capsid dimerization domain-like"/>
    <property type="match status" value="1"/>
</dbReference>
<dbReference type="SUPFAM" id="SSF47943">
    <property type="entry name" value="Retrovirus capsid protein, N-terminal core domain"/>
    <property type="match status" value="1"/>
</dbReference>
<dbReference type="SUPFAM" id="SSF57756">
    <property type="entry name" value="Retrovirus zinc finger-like domains"/>
    <property type="match status" value="1"/>
</dbReference>
<dbReference type="PROSITE" id="PS50158">
    <property type="entry name" value="ZF_CCHC"/>
    <property type="match status" value="2"/>
</dbReference>
<proteinExistence type="evidence at protein level"/>
<gene>
    <name type="primary">gag</name>
</gene>
<name>GAG_HV1MV</name>
<keyword id="KW-0002">3D-structure</keyword>
<keyword id="KW-0014">AIDS</keyword>
<keyword id="KW-0167">Capsid protein</keyword>
<keyword id="KW-1032">Host cell membrane</keyword>
<keyword id="KW-1035">Host cytoplasm</keyword>
<keyword id="KW-1039">Host endosome</keyword>
<keyword id="KW-1043">Host membrane</keyword>
<keyword id="KW-1048">Host nucleus</keyword>
<keyword id="KW-0945">Host-virus interaction</keyword>
<keyword id="KW-0449">Lipoprotein</keyword>
<keyword id="KW-0472">Membrane</keyword>
<keyword id="KW-0479">Metal-binding</keyword>
<keyword id="KW-0488">Methylation</keyword>
<keyword id="KW-0519">Myristate</keyword>
<keyword id="KW-0597">Phosphoprotein</keyword>
<keyword id="KW-0677">Repeat</keyword>
<keyword id="KW-0688">Ribosomal frameshifting</keyword>
<keyword id="KW-0694">RNA-binding</keyword>
<keyword id="KW-1198">Viral budding</keyword>
<keyword id="KW-1187">Viral budding via the host ESCRT complexes</keyword>
<keyword id="KW-0543">Viral nucleoprotein</keyword>
<keyword id="KW-1188">Viral release from host cell</keyword>
<keyword id="KW-0946">Virion</keyword>
<keyword id="KW-0862">Zinc</keyword>
<keyword id="KW-0863">Zinc-finger</keyword>
<protein>
    <recommendedName>
        <fullName>Gag polyprotein</fullName>
    </recommendedName>
    <alternativeName>
        <fullName>Pr55Gag</fullName>
    </alternativeName>
    <component>
        <recommendedName>
            <fullName>Matrix protein p17</fullName>
            <shortName>MA</shortName>
        </recommendedName>
    </component>
    <component>
        <recommendedName>
            <fullName>Capsid protein p24</fullName>
            <shortName>CA</shortName>
        </recommendedName>
    </component>
    <component>
        <recommendedName>
            <fullName evidence="6">Spacer peptide 1</fullName>
            <shortName>SP1</shortName>
        </recommendedName>
        <alternativeName>
            <fullName>p2</fullName>
        </alternativeName>
    </component>
    <component>
        <recommendedName>
            <fullName>Nucleocapsid protein p7</fullName>
            <shortName>NC</shortName>
        </recommendedName>
    </component>
    <component>
        <recommendedName>
            <fullName evidence="6">Spacer peptide 2</fullName>
            <shortName>SP2</shortName>
        </recommendedName>
        <alternativeName>
            <fullName>p1</fullName>
        </alternativeName>
    </component>
    <component>
        <recommendedName>
            <fullName>p6-gag</fullName>
        </recommendedName>
    </component>
</protein>
<reference key="1">
    <citation type="journal article" date="1994" name="J. Virol.">
        <title>A new subtype of human immunodeficiency virus type 1 (MVP-5180) from Cameroon.</title>
        <authorList>
            <person name="Gurtler L.G."/>
            <person name="Hauser P.H."/>
            <person name="Eberle J."/>
            <person name="von Brunn A."/>
            <person name="Knapp S."/>
            <person name="Zekeng L."/>
            <person name="Tsague J.M."/>
            <person name="Kaptue L."/>
        </authorList>
    </citation>
    <scope>NUCLEOTIDE SEQUENCE [GENOMIC RNA]</scope>
</reference>
<organismHost>
    <name type="scientific">Homo sapiens</name>
    <name type="common">Human</name>
    <dbReference type="NCBI Taxonomy" id="9606"/>
</organismHost>
<sequence>MGARASVLTGSKLDAWERIRLRPGSKKAYRLKHLVWASRELERYACNPGLLETAEGTEQLLQQLEPALKTGSEDLKSLWNAIAVLWCVHNRFDIRDTQQAIQKLKEVMASRKSAEAAKEETSPRQTSQNYPIVTNAQGQMVHQAISPRTLNAWVKAVEEKAFNPEIIPMFMALSEGAVPYDINTMLNAIGGHQGALQVLKEVINEEAAEWDRTHPPAMGPLPPGQIREPTGSDIAGTTSTQQEQIIWTTRGANSIPVGDIYRKWIVLGLNKMVKMYSPVSILDIRQGPKEPFRDYVDRFYKTLRAEQATQEVKNWMTETLLVQNSNPDCKQILKALGPEATLEEMMVACQGVGGPTHKAKILAEAMASAQQDLKGGYTAVFMQRGQNPNRKGPIKCFNCGKEGHIAKNCRAPRKRGCWKCGQEGHQMKDCKNGRQANFLGKYWPPGGTRPGNYVQKQVSPSAPPMEEAVKEQENQSQKGDQEELYPFASLKSLFGTDQ</sequence>
<feature type="initiator methionine" description="Removed; by host" evidence="1">
    <location>
        <position position="1"/>
    </location>
</feature>
<feature type="chain" id="PRO_0000261224" description="Gag polyprotein">
    <location>
        <begin position="2"/>
        <end position="498"/>
    </location>
</feature>
<feature type="chain" id="PRO_0000246386" description="Matrix protein p17" evidence="1">
    <location>
        <begin position="2"/>
        <end position="130"/>
    </location>
</feature>
<feature type="chain" id="PRO_0000246387" description="Capsid protein p24" evidence="1">
    <location>
        <begin position="131"/>
        <end position="362"/>
    </location>
</feature>
<feature type="peptide" id="PRO_0000246388" description="Spacer peptide 1" evidence="1">
    <location>
        <begin position="363"/>
        <end position="381"/>
    </location>
</feature>
<feature type="chain" id="PRO_0000246389" description="Nucleocapsid protein p7" evidence="1">
    <location>
        <begin position="382"/>
        <end position="437"/>
    </location>
</feature>
<feature type="peptide" id="PRO_0000246390" description="Spacer peptide 2" evidence="1">
    <location>
        <begin position="438"/>
        <end position="453"/>
    </location>
</feature>
<feature type="chain" id="PRO_0000246391" description="p6-gag" evidence="1">
    <location>
        <begin position="454"/>
        <end position="498"/>
    </location>
</feature>
<feature type="zinc finger region" description="CCHC-type 1" evidence="8">
    <location>
        <begin position="394"/>
        <end position="411"/>
    </location>
</feature>
<feature type="zinc finger region" description="CCHC-type 2" evidence="8">
    <location>
        <begin position="415"/>
        <end position="432"/>
    </location>
</feature>
<feature type="region of interest" description="Interaction with Gp41" evidence="6">
    <location>
        <begin position="7"/>
        <end position="31"/>
    </location>
</feature>
<feature type="region of interest" description="Interaction with host CALM1" evidence="5">
    <location>
        <begin position="8"/>
        <end position="43"/>
    </location>
</feature>
<feature type="region of interest" description="Interaction with host AP3D1" evidence="7">
    <location>
        <begin position="12"/>
        <end position="19"/>
    </location>
</feature>
<feature type="region of interest" description="Interaction with membrane phosphatidylinositol 4,5-bisphosphate and RNA" evidence="6">
    <location>
        <begin position="14"/>
        <end position="33"/>
    </location>
</feature>
<feature type="region of interest" description="Interaction with membrane phosphatidylinositol 4,5-bisphosphate" evidence="6">
    <location>
        <begin position="73"/>
        <end position="77"/>
    </location>
</feature>
<feature type="region of interest" description="Interaction with host PPIA/CYPA and NUP153" evidence="6">
    <location>
        <begin position="187"/>
        <end position="225"/>
    </location>
</feature>
<feature type="region of interest" description="PPIA/CYPA-binding loop" evidence="5">
    <location>
        <begin position="215"/>
        <end position="223"/>
    </location>
</feature>
<feature type="region of interest" description="Dimerization/Multimerization of capsid protein p24" evidence="5">
    <location>
        <begin position="276"/>
        <end position="362"/>
    </location>
</feature>
<feature type="region of interest" description="Disordered" evidence="9">
    <location>
        <begin position="447"/>
        <end position="483"/>
    </location>
</feature>
<feature type="short sequence motif" description="Nuclear export signal" evidence="1">
    <location>
        <begin position="16"/>
        <end position="22"/>
    </location>
</feature>
<feature type="short sequence motif" description="Nuclear localization signal" evidence="1">
    <location>
        <begin position="26"/>
        <end position="32"/>
    </location>
</feature>
<feature type="short sequence motif" description="PTAP/PSAP motif">
    <location>
        <begin position="460"/>
        <end position="463"/>
    </location>
</feature>
<feature type="short sequence motif" description="LYPX(n)L motif">
    <location>
        <begin position="484"/>
        <end position="493"/>
    </location>
</feature>
<feature type="site" description="Cleavage; by viral protease" evidence="1">
    <location>
        <begin position="130"/>
        <end position="131"/>
    </location>
</feature>
<feature type="site" description="Cleavage; by viral protease" evidence="1">
    <location>
        <begin position="362"/>
        <end position="363"/>
    </location>
</feature>
<feature type="site" description="Cleavage; by viral protease" evidence="1">
    <location>
        <begin position="381"/>
        <end position="382"/>
    </location>
</feature>
<feature type="site" description="Cleavage; by viral protease" evidence="1">
    <location>
        <begin position="437"/>
        <end position="438"/>
    </location>
</feature>
<feature type="site" description="Cleavage; by viral protease" evidence="1">
    <location>
        <begin position="453"/>
        <end position="454"/>
    </location>
</feature>
<feature type="modified residue" description="Phosphoserine; by host MAPK1" evidence="6">
    <location>
        <position position="146"/>
    </location>
</feature>
<feature type="modified residue" description="Asymmetric dimethylarginine; in Nucleocapsid protein p7; by host PRMT6" evidence="1">
    <location>
        <position position="413"/>
    </location>
</feature>
<feature type="lipid moiety-binding region" description="N-myristoyl glycine; by host" evidence="1">
    <location>
        <position position="2"/>
    </location>
</feature>
<feature type="strand" evidence="11">
    <location>
        <begin position="132"/>
        <end position="134"/>
    </location>
</feature>
<feature type="strand" evidence="11">
    <location>
        <begin position="140"/>
        <end position="142"/>
    </location>
</feature>
<feature type="helix" evidence="11">
    <location>
        <begin position="147"/>
        <end position="160"/>
    </location>
</feature>
<feature type="helix" evidence="11">
    <location>
        <begin position="166"/>
        <end position="173"/>
    </location>
</feature>
<feature type="turn" evidence="11">
    <location>
        <begin position="174"/>
        <end position="176"/>
    </location>
</feature>
<feature type="helix" evidence="11">
    <location>
        <begin position="179"/>
        <end position="188"/>
    </location>
</feature>
<feature type="helix" evidence="11">
    <location>
        <begin position="193"/>
        <end position="212"/>
    </location>
</feature>
<feature type="helix" evidence="11">
    <location>
        <begin position="231"/>
        <end position="234"/>
    </location>
</feature>
<feature type="strand" evidence="11">
    <location>
        <begin position="237"/>
        <end position="239"/>
    </location>
</feature>
<feature type="helix" evidence="11">
    <location>
        <begin position="241"/>
        <end position="249"/>
    </location>
</feature>
<feature type="strand" evidence="11">
    <location>
        <begin position="251"/>
        <end position="253"/>
    </location>
</feature>
<feature type="helix" evidence="11">
    <location>
        <begin position="257"/>
        <end position="275"/>
    </location>
</feature>
<feature type="helix" evidence="11">
    <location>
        <begin position="281"/>
        <end position="283"/>
    </location>
</feature>
<feature type="helix" evidence="11">
    <location>
        <begin position="292"/>
        <end position="306"/>
    </location>
</feature>
<feature type="helix" evidence="11">
    <location>
        <begin position="315"/>
        <end position="319"/>
    </location>
</feature>
<feature type="helix" evidence="11">
    <location>
        <begin position="320"/>
        <end position="323"/>
    </location>
</feature>
<feature type="helix" evidence="11">
    <location>
        <begin position="327"/>
        <end position="334"/>
    </location>
</feature>
<feature type="helix" evidence="11">
    <location>
        <begin position="342"/>
        <end position="348"/>
    </location>
</feature>
<organism>
    <name type="scientific">Human immunodeficiency virus type 1 group O (isolate MVP5180)</name>
    <name type="common">HIV-1</name>
    <dbReference type="NCBI Taxonomy" id="388816"/>
    <lineage>
        <taxon>Viruses</taxon>
        <taxon>Riboviria</taxon>
        <taxon>Pararnavirae</taxon>
        <taxon>Artverviricota</taxon>
        <taxon>Revtraviricetes</taxon>
        <taxon>Ortervirales</taxon>
        <taxon>Retroviridae</taxon>
        <taxon>Orthoretrovirinae</taxon>
        <taxon>Lentivirus</taxon>
        <taxon>Human immunodeficiency virus type 1</taxon>
    </lineage>
</organism>
<comment type="function">
    <molecule>Gag polyprotein</molecule>
    <text evidence="5">Mediates, with Gag-Pol polyprotein, the essential events in virion assembly, including binding the plasma membrane, making the protein-protein interactions necessary to create spherical particles, recruiting the viral Env proteins, and packaging the genomic RNA via direct interactions with the RNA packaging sequence (Psi).</text>
</comment>
<comment type="function">
    <molecule>Matrix protein p17</molecule>
    <text evidence="1 6">Targets the polyprotein to the plasma membrane via a multipartite membrane-binding signal, that includes its myristoylated N-terminus (By similarity). Matrix protein is part of the pre-integration complex. Implicated in the release from host cell mediated by Vpu. Binds to RNA (By similarity).</text>
</comment>
<comment type="function">
    <molecule>Capsid protein p24</molecule>
    <text evidence="5 6">Forms the conical core that encapsulates the genomic RNA-nucleocapsid complex in the virion. Most core are conical, with only 7% tubular. The core is constituted by capsid protein hexamer subunits. The core is disassembled soon after virion entry (By similarity). The capsid promotes immune invasion by cloaking viral DNA from CGAS detection (By similarity). Host restriction factors such as TRIM5-alpha or TRIMCyp bind retroviral capsids and cause premature capsid disassembly, leading to blocks in reverse transcription. Capsid restriction by TRIM5 is one of the factors which restricts HIV-1 to the human species. Host PIN1 apparently facilitates the virion uncoating (By similarity). On the other hand, interactions with PDZD8 or CYPA stabilize the capsid (By similarity).</text>
</comment>
<comment type="function">
    <molecule>Nucleocapsid protein p7</molecule>
    <text evidence="5">Encapsulates and protects viral dimeric unspliced genomic RNA (gRNA). Binds these RNAs through its zinc fingers. Acts as a nucleic acid chaperone which is involved in rearangement of nucleic acid secondary structure during gRNA retrotranscription. Also facilitates template switch leading to recombination. As part of the polyprotein, participates in gRNA dimerization, packaging, tRNA incorporation and virion assembly.</text>
</comment>
<comment type="function">
    <molecule>p6-gag</molecule>
    <text evidence="6">Plays a role in budding of the assembled particle by interacting with the host class E VPS proteins TSG101 and PDCD6IP/AIP1.</text>
</comment>
<comment type="subunit">
    <molecule>Gag polyprotein</molecule>
    <text evidence="4 5">Homotrimer; further assembles as hexamers of trimers. Oligomerization possibly creates a central hole into which the cytoplasmic tail of the gp41 envelope protein may be inserted. Interacts with host TRIM22; this interaction seems to disrupt proper trafficking of Gag polyprotein and may interfere with budding. Interacts with host PDZD8. When ubiquitinated, interacts (via p6-gag domain) with host PACSIN2; this interaction allows PACSIN2 recruitment to viral assembly sites and its subsequent incorporation into virions. Interacts with MOV10 (By similarity).</text>
</comment>
<comment type="subunit">
    <molecule>Matrix protein p17</molecule>
    <text evidence="5 6">Homotrimer; further assembles as hexamers of trimers. Interacts with gp41 (via C-terminus). Interacts with host CALM1; this interaction induces a conformational change in the Matrix protein, triggering exposure of the myristate group. Interacts with host AP3D1; this interaction allows the polyprotein trafficking to multivesicular bodies during virus assembly. Part of the pre-integration complex (PIC) which is composed of viral genome, matrix protein, Vpr and integrase.</text>
</comment>
<comment type="subunit">
    <molecule>Capsid protein p24</molecule>
    <text evidence="5 6">Homodimer; the homodimer further multimerizes as homohexamers or homopentamers (By similarity). Interacts with host NUP98 (By similarity). Interacts with host PPIA/CYPA; this interaction stabilizes the capsid (By similarity). Interacts with host NUP153 (By similarity). Interacts with host PDZD8; this interaction stabilizes the capsid. Interacts with host TRIM5; this interaction destabilizes the capsid (By similarity). Interacts with host CPSF6 (By similarity). Interacts with host NONO; the interaction is weak (By similarity).</text>
</comment>
<comment type="subunit">
    <molecule>Nucleocapsid protein p7</molecule>
    <text evidence="6">Interacts with host NUP98.</text>
</comment>
<comment type="subunit">
    <molecule>p6-gag</molecule>
    <text evidence="3 6">Interacts with Vpr; this interaction allows Vpr incorporation into the virion. Interacts with host TSG101. p6-gag interacts with host PDCD6IP/AIP1.</text>
</comment>
<comment type="subcellular location">
    <molecule>Gag polyprotein</molecule>
    <subcellularLocation>
        <location evidence="6">Host cell membrane</location>
        <topology evidence="6">Lipid-anchor</topology>
    </subcellularLocation>
    <subcellularLocation>
        <location evidence="6">Host endosome</location>
        <location evidence="6">Host multivesicular body</location>
    </subcellularLocation>
    <text evidence="6">These locations are probably linked to virus assembly sites. The main location is the cell membrane, but under some circumstances, late endosomal compartments can serve as productive sites for virion assembly.</text>
</comment>
<comment type="subcellular location">
    <molecule>Matrix protein p17</molecule>
    <subcellularLocation>
        <location evidence="6">Virion membrane</location>
        <topology evidence="6">Lipid-anchor</topology>
    </subcellularLocation>
    <subcellularLocation>
        <location evidence="1">Host nucleus</location>
    </subcellularLocation>
    <subcellularLocation>
        <location evidence="1">Host cytoplasm</location>
    </subcellularLocation>
</comment>
<comment type="subcellular location">
    <molecule>Capsid protein p24</molecule>
    <subcellularLocation>
        <location evidence="6">Virion</location>
    </subcellularLocation>
</comment>
<comment type="subcellular location">
    <molecule>Nucleocapsid protein p7</molecule>
    <subcellularLocation>
        <location evidence="6">Virion</location>
    </subcellularLocation>
</comment>
<comment type="alternative products">
    <event type="ribosomal frameshifting"/>
    <isoform>
        <id>Q79665-1</id>
        <name>Gag polyprotein</name>
        <sequence type="displayed"/>
    </isoform>
    <isoform>
        <id>Q79666-1</id>
        <name>Gag-Pol polyprotein</name>
        <sequence type="external"/>
    </isoform>
    <text>Translation results in the formation of the Gag polyprotein most of the time. Ribosomal frameshifting at the gag-pol genes boundary occurs at low frequency and produces the Gag-Pol polyprotein. This strategy of translation probably allows the virus to modulate the quantity of each viral protein. Maintenance of a correct Gag to Gag-Pol ratio is essential for RNA dimerization and viral infectivity.</text>
</comment>
<comment type="domain">
    <text evidence="6">Late-budding domains (L domains) are short sequence motifs essential for viral particle budding. They recruit proteins of the host ESCRT machinery (Endosomal Sorting Complex Required for Transport) or ESCRT-associated proteins. p6-gag contains two L domains: a PTAP/PSAP motif, which interacts with the UEV domain of TSG101 and a LYPX(n)L motif which interacts with PDCD6IP/AIP1.</text>
</comment>
<comment type="PTM">
    <text evidence="6">Gag-Pol polyprotein: Specific enzymatic cleavages by the viral protease yield mature proteins.</text>
</comment>
<comment type="PTM">
    <molecule>Matrix protein p17</molecule>
    <text evidence="5">Tyrosine phosphorylated presumably in the virion by a host kinase. Phosphorylation is apparently not a major regulator of membrane association.</text>
</comment>
<comment type="PTM">
    <text evidence="6">Capsid protein p24 is phosphorylated possibly by host MAPK1; this phosphorylation is necessary for Pin1-mediated virion uncoating.</text>
</comment>
<comment type="PTM">
    <text evidence="2">Nucleocapsid protein p7 is methylated by host PRMT6, impairing its function by reducing RNA annealing and the initiation of reverse transcription.</text>
</comment>
<comment type="miscellaneous">
    <text>HIV-1 lineages are divided in three main groups, M (for Major), O (for Outlier), and N (for New, or Non-M, Non-O). The vast majority of strains found worldwide belong to the group M. Group O seems to be endemic to and largely confined to Cameroon and neighboring countries in West Central Africa, where these viruses represent a small minority of HIV-1 strains. The group N is represented by a limited number of isolates from Cameroonian persons. The group M is further subdivided in 9 clades or subtypes (A to D, F to H, J and K).</text>
</comment>
<comment type="miscellaneous">
    <molecule>Isoform Gag polyprotein</molecule>
    <text>Produced by conventional translation.</text>
</comment>
<comment type="similarity">
    <text evidence="10">Belongs to the primate lentivirus group gag polyprotein family.</text>
</comment>